<accession>Q2KYV6</accession>
<dbReference type="EC" id="2.7.7.18" evidence="1"/>
<dbReference type="EMBL" id="AM167904">
    <property type="protein sequence ID" value="CAJ49820.1"/>
    <property type="molecule type" value="Genomic_DNA"/>
</dbReference>
<dbReference type="RefSeq" id="WP_012417872.1">
    <property type="nucleotide sequence ID" value="NC_010645.1"/>
</dbReference>
<dbReference type="SMR" id="Q2KYV6"/>
<dbReference type="STRING" id="360910.BAV2210"/>
<dbReference type="KEGG" id="bav:BAV2210"/>
<dbReference type="eggNOG" id="COG1057">
    <property type="taxonomic scope" value="Bacteria"/>
</dbReference>
<dbReference type="HOGENOM" id="CLU_069765_0_0_4"/>
<dbReference type="OrthoDB" id="5295945at2"/>
<dbReference type="UniPathway" id="UPA00253">
    <property type="reaction ID" value="UER00332"/>
</dbReference>
<dbReference type="Proteomes" id="UP000001977">
    <property type="component" value="Chromosome"/>
</dbReference>
<dbReference type="GO" id="GO:0005524">
    <property type="term" value="F:ATP binding"/>
    <property type="evidence" value="ECO:0007669"/>
    <property type="project" value="UniProtKB-KW"/>
</dbReference>
<dbReference type="GO" id="GO:0004515">
    <property type="term" value="F:nicotinate-nucleotide adenylyltransferase activity"/>
    <property type="evidence" value="ECO:0007669"/>
    <property type="project" value="UniProtKB-UniRule"/>
</dbReference>
<dbReference type="GO" id="GO:0009435">
    <property type="term" value="P:NAD biosynthetic process"/>
    <property type="evidence" value="ECO:0007669"/>
    <property type="project" value="UniProtKB-UniRule"/>
</dbReference>
<dbReference type="CDD" id="cd02165">
    <property type="entry name" value="NMNAT"/>
    <property type="match status" value="1"/>
</dbReference>
<dbReference type="Gene3D" id="3.40.50.620">
    <property type="entry name" value="HUPs"/>
    <property type="match status" value="1"/>
</dbReference>
<dbReference type="HAMAP" id="MF_00244">
    <property type="entry name" value="NaMN_adenylyltr"/>
    <property type="match status" value="1"/>
</dbReference>
<dbReference type="InterPro" id="IPR004821">
    <property type="entry name" value="Cyt_trans-like"/>
</dbReference>
<dbReference type="InterPro" id="IPR005248">
    <property type="entry name" value="NadD/NMNAT"/>
</dbReference>
<dbReference type="InterPro" id="IPR014729">
    <property type="entry name" value="Rossmann-like_a/b/a_fold"/>
</dbReference>
<dbReference type="NCBIfam" id="TIGR00482">
    <property type="entry name" value="nicotinate (nicotinamide) nucleotide adenylyltransferase"/>
    <property type="match status" value="1"/>
</dbReference>
<dbReference type="NCBIfam" id="NF000840">
    <property type="entry name" value="PRK00071.1-3"/>
    <property type="match status" value="1"/>
</dbReference>
<dbReference type="PANTHER" id="PTHR39321">
    <property type="entry name" value="NICOTINATE-NUCLEOTIDE ADENYLYLTRANSFERASE-RELATED"/>
    <property type="match status" value="1"/>
</dbReference>
<dbReference type="PANTHER" id="PTHR39321:SF3">
    <property type="entry name" value="PHOSPHOPANTETHEINE ADENYLYLTRANSFERASE"/>
    <property type="match status" value="1"/>
</dbReference>
<dbReference type="Pfam" id="PF01467">
    <property type="entry name" value="CTP_transf_like"/>
    <property type="match status" value="1"/>
</dbReference>
<dbReference type="SUPFAM" id="SSF52374">
    <property type="entry name" value="Nucleotidylyl transferase"/>
    <property type="match status" value="1"/>
</dbReference>
<organism>
    <name type="scientific">Bordetella avium (strain 197N)</name>
    <dbReference type="NCBI Taxonomy" id="360910"/>
    <lineage>
        <taxon>Bacteria</taxon>
        <taxon>Pseudomonadati</taxon>
        <taxon>Pseudomonadota</taxon>
        <taxon>Betaproteobacteria</taxon>
        <taxon>Burkholderiales</taxon>
        <taxon>Alcaligenaceae</taxon>
        <taxon>Bordetella</taxon>
    </lineage>
</organism>
<keyword id="KW-0067">ATP-binding</keyword>
<keyword id="KW-0520">NAD</keyword>
<keyword id="KW-0547">Nucleotide-binding</keyword>
<keyword id="KW-0548">Nucleotidyltransferase</keyword>
<keyword id="KW-0662">Pyridine nucleotide biosynthesis</keyword>
<keyword id="KW-1185">Reference proteome</keyword>
<keyword id="KW-0808">Transferase</keyword>
<evidence type="ECO:0000255" key="1">
    <source>
        <dbReference type="HAMAP-Rule" id="MF_00244"/>
    </source>
</evidence>
<sequence>MKRIGLLGGSFDPIHVAHVTLAQSALAHLQLDEVQLVPAANPWQRAPLAATAQDRLAMINAAITGLPGLAVNTSEIQRGGATYTVDTILALPQDARYTWILGADQLANFCTWRDWETIVRHVDLAVATRPGSTLQAAPELAQALLEAGRSLRELPFTPMPVSASEIRQRLAQGQNTEGLLPEGVARHIAEHGLYRPA</sequence>
<protein>
    <recommendedName>
        <fullName evidence="1">Probable nicotinate-nucleotide adenylyltransferase</fullName>
        <ecNumber evidence="1">2.7.7.18</ecNumber>
    </recommendedName>
    <alternativeName>
        <fullName evidence="1">Deamido-NAD(+) diphosphorylase</fullName>
    </alternativeName>
    <alternativeName>
        <fullName evidence="1">Deamido-NAD(+) pyrophosphorylase</fullName>
    </alternativeName>
    <alternativeName>
        <fullName evidence="1">Nicotinate mononucleotide adenylyltransferase</fullName>
        <shortName evidence="1">NaMN adenylyltransferase</shortName>
    </alternativeName>
</protein>
<name>NADD_BORA1</name>
<gene>
    <name evidence="1" type="primary">nadD</name>
    <name type="ordered locus">BAV2210</name>
</gene>
<proteinExistence type="inferred from homology"/>
<feature type="chain" id="PRO_0000310099" description="Probable nicotinate-nucleotide adenylyltransferase">
    <location>
        <begin position="1"/>
        <end position="197"/>
    </location>
</feature>
<reference key="1">
    <citation type="journal article" date="2006" name="J. Bacteriol.">
        <title>Comparison of the genome sequence of the poultry pathogen Bordetella avium with those of B. bronchiseptica, B. pertussis, and B. parapertussis reveals extensive diversity in surface structures associated with host interaction.</title>
        <authorList>
            <person name="Sebaihia M."/>
            <person name="Preston A."/>
            <person name="Maskell D.J."/>
            <person name="Kuzmiak H."/>
            <person name="Connell T.D."/>
            <person name="King N.D."/>
            <person name="Orndorff P.E."/>
            <person name="Miyamoto D.M."/>
            <person name="Thomson N.R."/>
            <person name="Harris D."/>
            <person name="Goble A."/>
            <person name="Lord A."/>
            <person name="Murphy L."/>
            <person name="Quail M.A."/>
            <person name="Rutter S."/>
            <person name="Squares R."/>
            <person name="Squares S."/>
            <person name="Woodward J."/>
            <person name="Parkhill J."/>
            <person name="Temple L.M."/>
        </authorList>
    </citation>
    <scope>NUCLEOTIDE SEQUENCE [LARGE SCALE GENOMIC DNA]</scope>
    <source>
        <strain>197N</strain>
    </source>
</reference>
<comment type="function">
    <text evidence="1">Catalyzes the reversible adenylation of nicotinate mononucleotide (NaMN) to nicotinic acid adenine dinucleotide (NaAD).</text>
</comment>
<comment type="catalytic activity">
    <reaction evidence="1">
        <text>nicotinate beta-D-ribonucleotide + ATP + H(+) = deamido-NAD(+) + diphosphate</text>
        <dbReference type="Rhea" id="RHEA:22860"/>
        <dbReference type="ChEBI" id="CHEBI:15378"/>
        <dbReference type="ChEBI" id="CHEBI:30616"/>
        <dbReference type="ChEBI" id="CHEBI:33019"/>
        <dbReference type="ChEBI" id="CHEBI:57502"/>
        <dbReference type="ChEBI" id="CHEBI:58437"/>
        <dbReference type="EC" id="2.7.7.18"/>
    </reaction>
</comment>
<comment type="pathway">
    <text evidence="1">Cofactor biosynthesis; NAD(+) biosynthesis; deamido-NAD(+) from nicotinate D-ribonucleotide: step 1/1.</text>
</comment>
<comment type="similarity">
    <text evidence="1">Belongs to the NadD family.</text>
</comment>